<gene>
    <name evidence="1" type="primary">secE</name>
</gene>
<keyword id="KW-1003">Cell membrane</keyword>
<keyword id="KW-0472">Membrane</keyword>
<keyword id="KW-0653">Protein transport</keyword>
<keyword id="KW-0811">Translocation</keyword>
<keyword id="KW-0812">Transmembrane</keyword>
<keyword id="KW-1133">Transmembrane helix</keyword>
<keyword id="KW-0813">Transport</keyword>
<protein>
    <recommendedName>
        <fullName evidence="1">Protein translocase subunit SecE</fullName>
    </recommendedName>
</protein>
<sequence>MTDAVGSIDMPDAEDEAPESKKKSRKGGKRGKKGPLGRLALFYRQIVAELRKVVWPTRSQLTTYTSVVIVFVVVMIGLVTVLDIGFARVVKYVFG</sequence>
<proteinExistence type="inferred from homology"/>
<evidence type="ECO:0000255" key="1">
    <source>
        <dbReference type="HAMAP-Rule" id="MF_00422"/>
    </source>
</evidence>
<evidence type="ECO:0000256" key="2">
    <source>
        <dbReference type="SAM" id="MobiDB-lite"/>
    </source>
</evidence>
<reference key="1">
    <citation type="journal article" date="1994" name="FEMS Microbiol. Lett.">
        <title>The nusG gene of Streptomyces griseus: cloning of the gene and analysis of the A-factor binding properties of the gene product.</title>
        <authorList>
            <person name="Kuberski S."/>
            <person name="Kasberg T."/>
            <person name="Distler J."/>
        </authorList>
    </citation>
    <scope>NUCLEOTIDE SEQUENCE [GENOMIC DNA]</scope>
    <source>
        <strain>N2-3-11</strain>
    </source>
</reference>
<reference key="2">
    <citation type="journal article" date="1994" name="Biochim. Biophys. Acta">
        <title>Organization and nucleotide sequence of the secE-nusG region of Streptomyces griseus.</title>
        <authorList>
            <person name="Miyake K."/>
            <person name="Onaka H."/>
            <person name="Horinouchi S."/>
            <person name="Beppu T."/>
        </authorList>
    </citation>
    <scope>NUCLEOTIDE SEQUENCE [GENOMIC DNA] OF 10-95</scope>
    <source>
        <strain>IFO 13350 / CBS 651.72</strain>
    </source>
</reference>
<organism>
    <name type="scientific">Streptomyces griseus</name>
    <dbReference type="NCBI Taxonomy" id="1911"/>
    <lineage>
        <taxon>Bacteria</taxon>
        <taxon>Bacillati</taxon>
        <taxon>Actinomycetota</taxon>
        <taxon>Actinomycetes</taxon>
        <taxon>Kitasatosporales</taxon>
        <taxon>Streptomycetaceae</taxon>
        <taxon>Streptomyces</taxon>
    </lineage>
</organism>
<name>SECE_STRGR</name>
<dbReference type="EMBL" id="X72787">
    <property type="protein sequence ID" value="CAA51295.1"/>
    <property type="molecule type" value="Genomic_DNA"/>
</dbReference>
<dbReference type="EMBL" id="D17464">
    <property type="protein sequence ID" value="BAA04280.1"/>
    <property type="molecule type" value="Genomic_DNA"/>
</dbReference>
<dbReference type="PIR" id="S41060">
    <property type="entry name" value="S41060"/>
</dbReference>
<dbReference type="SMR" id="P36690"/>
<dbReference type="STRING" id="1911.GCA_001715295_02338"/>
<dbReference type="GO" id="GO:0005886">
    <property type="term" value="C:plasma membrane"/>
    <property type="evidence" value="ECO:0007669"/>
    <property type="project" value="UniProtKB-SubCell"/>
</dbReference>
<dbReference type="GO" id="GO:0008320">
    <property type="term" value="F:protein transmembrane transporter activity"/>
    <property type="evidence" value="ECO:0007669"/>
    <property type="project" value="UniProtKB-UniRule"/>
</dbReference>
<dbReference type="GO" id="GO:0065002">
    <property type="term" value="P:intracellular protein transmembrane transport"/>
    <property type="evidence" value="ECO:0007669"/>
    <property type="project" value="UniProtKB-UniRule"/>
</dbReference>
<dbReference type="GO" id="GO:0009306">
    <property type="term" value="P:protein secretion"/>
    <property type="evidence" value="ECO:0007669"/>
    <property type="project" value="UniProtKB-UniRule"/>
</dbReference>
<dbReference type="GO" id="GO:0006605">
    <property type="term" value="P:protein targeting"/>
    <property type="evidence" value="ECO:0007669"/>
    <property type="project" value="UniProtKB-UniRule"/>
</dbReference>
<dbReference type="GO" id="GO:0043952">
    <property type="term" value="P:protein transport by the Sec complex"/>
    <property type="evidence" value="ECO:0007669"/>
    <property type="project" value="UniProtKB-UniRule"/>
</dbReference>
<dbReference type="Gene3D" id="1.20.5.1030">
    <property type="entry name" value="Preprotein translocase secy subunit"/>
    <property type="match status" value="1"/>
</dbReference>
<dbReference type="HAMAP" id="MF_00422">
    <property type="entry name" value="SecE"/>
    <property type="match status" value="1"/>
</dbReference>
<dbReference type="InterPro" id="IPR005807">
    <property type="entry name" value="SecE_bac"/>
</dbReference>
<dbReference type="InterPro" id="IPR038379">
    <property type="entry name" value="SecE_sf"/>
</dbReference>
<dbReference type="InterPro" id="IPR001901">
    <property type="entry name" value="Translocase_SecE/Sec61-g"/>
</dbReference>
<dbReference type="NCBIfam" id="TIGR00964">
    <property type="entry name" value="secE_bact"/>
    <property type="match status" value="1"/>
</dbReference>
<dbReference type="PANTHER" id="PTHR33910">
    <property type="entry name" value="PROTEIN TRANSLOCASE SUBUNIT SECE"/>
    <property type="match status" value="1"/>
</dbReference>
<dbReference type="PANTHER" id="PTHR33910:SF1">
    <property type="entry name" value="PROTEIN TRANSLOCASE SUBUNIT SECE"/>
    <property type="match status" value="1"/>
</dbReference>
<dbReference type="Pfam" id="PF00584">
    <property type="entry name" value="SecE"/>
    <property type="match status" value="1"/>
</dbReference>
<dbReference type="PROSITE" id="PS01067">
    <property type="entry name" value="SECE_SEC61G"/>
    <property type="match status" value="1"/>
</dbReference>
<feature type="chain" id="PRO_0000104185" description="Protein translocase subunit SecE">
    <location>
        <begin position="1"/>
        <end position="95"/>
    </location>
</feature>
<feature type="transmembrane region" description="Helical" evidence="1">
    <location>
        <begin position="67"/>
        <end position="87"/>
    </location>
</feature>
<feature type="region of interest" description="Disordered" evidence="2">
    <location>
        <begin position="1"/>
        <end position="35"/>
    </location>
</feature>
<feature type="compositionally biased region" description="Basic residues" evidence="2">
    <location>
        <begin position="22"/>
        <end position="35"/>
    </location>
</feature>
<comment type="function">
    <text evidence="1">Essential subunit of the Sec protein translocation channel SecYEG. Clamps together the 2 halves of SecY. May contact the channel plug during translocation.</text>
</comment>
<comment type="subunit">
    <text evidence="1">Component of the Sec protein translocase complex. Heterotrimer consisting of SecY, SecE and SecG subunits. The heterotrimers can form oligomers, although 1 heterotrimer is thought to be able to translocate proteins. Interacts with the ribosome. Interacts with SecDF, and other proteins may be involved. Interacts with SecA.</text>
</comment>
<comment type="subcellular location">
    <subcellularLocation>
        <location evidence="1">Cell membrane</location>
        <topology evidence="1">Single-pass membrane protein</topology>
    </subcellularLocation>
</comment>
<comment type="similarity">
    <text evidence="1">Belongs to the SecE/SEC61-gamma family.</text>
</comment>
<accession>P36690</accession>